<feature type="transit peptide" description="Chloroplast" evidence="4">
    <location>
        <begin position="1"/>
        <end position="71"/>
    </location>
</feature>
<feature type="chain" id="PRO_0000247503" description="Leucine aminopeptidase 2, chloroplastic">
    <location>
        <begin position="72"/>
        <end position="598"/>
    </location>
</feature>
<feature type="active site" evidence="4">
    <location>
        <position position="379"/>
    </location>
</feature>
<feature type="active site" evidence="4">
    <location>
        <position position="456"/>
    </location>
</feature>
<feature type="binding site" evidence="2">
    <location>
        <position position="367"/>
    </location>
    <ligand>
        <name>Mn(2+)</name>
        <dbReference type="ChEBI" id="CHEBI:29035"/>
        <label>1</label>
    </ligand>
</feature>
<feature type="binding site" evidence="2">
    <location>
        <position position="372"/>
    </location>
    <ligand>
        <name>Mn(2+)</name>
        <dbReference type="ChEBI" id="CHEBI:29035"/>
        <label>1</label>
    </ligand>
</feature>
<feature type="binding site" evidence="2">
    <location>
        <position position="372"/>
    </location>
    <ligand>
        <name>Mn(2+)</name>
        <dbReference type="ChEBI" id="CHEBI:29035"/>
        <label>2</label>
    </ligand>
</feature>
<feature type="binding site" evidence="2">
    <location>
        <position position="392"/>
    </location>
    <ligand>
        <name>Mn(2+)</name>
        <dbReference type="ChEBI" id="CHEBI:29035"/>
        <label>1</label>
    </ligand>
</feature>
<feature type="binding site" evidence="2">
    <location>
        <position position="452"/>
    </location>
    <ligand>
        <name>Mn(2+)</name>
        <dbReference type="ChEBI" id="CHEBI:29035"/>
        <label>2</label>
    </ligand>
</feature>
<feature type="binding site" evidence="2">
    <location>
        <position position="454"/>
    </location>
    <ligand>
        <name>Mn(2+)</name>
        <dbReference type="ChEBI" id="CHEBI:29035"/>
        <label>1</label>
    </ligand>
</feature>
<feature type="binding site" evidence="2">
    <location>
        <position position="454"/>
    </location>
    <ligand>
        <name>Mn(2+)</name>
        <dbReference type="ChEBI" id="CHEBI:29035"/>
        <label>2</label>
    </ligand>
</feature>
<proteinExistence type="evidence at transcript level"/>
<dbReference type="EC" id="3.4.11.1"/>
<dbReference type="EC" id="3.4.11.5"/>
<dbReference type="EMBL" id="AP004094">
    <property type="protein sequence ID" value="BAD19264.1"/>
    <property type="molecule type" value="Genomic_DNA"/>
</dbReference>
<dbReference type="EMBL" id="AP005115">
    <property type="protein sequence ID" value="BAD19673.1"/>
    <property type="molecule type" value="Genomic_DNA"/>
</dbReference>
<dbReference type="EMBL" id="AP008208">
    <property type="protein sequence ID" value="BAF10293.1"/>
    <property type="status" value="ALT_SEQ"/>
    <property type="molecule type" value="Genomic_DNA"/>
</dbReference>
<dbReference type="EMBL" id="AP014958">
    <property type="protein sequence ID" value="BAS81349.1"/>
    <property type="status" value="ALT_SEQ"/>
    <property type="molecule type" value="Genomic_DNA"/>
</dbReference>
<dbReference type="EMBL" id="AP014958">
    <property type="protein sequence ID" value="BAS81350.1"/>
    <property type="status" value="ALT_SEQ"/>
    <property type="molecule type" value="Genomic_DNA"/>
</dbReference>
<dbReference type="EMBL" id="CM000139">
    <property type="protein sequence ID" value="EAZ24923.1"/>
    <property type="molecule type" value="Genomic_DNA"/>
</dbReference>
<dbReference type="EMBL" id="AK058513">
    <property type="status" value="NOT_ANNOTATED_CDS"/>
    <property type="molecule type" value="mRNA"/>
</dbReference>
<dbReference type="SMR" id="Q6K669"/>
<dbReference type="FunCoup" id="Q6K669">
    <property type="interactions" value="1909"/>
</dbReference>
<dbReference type="STRING" id="39947.Q6K669"/>
<dbReference type="MEROPS" id="M17.A03"/>
<dbReference type="CarbonylDB" id="Q6K669"/>
<dbReference type="PaxDb" id="39947-Q6K669"/>
<dbReference type="KEGG" id="dosa:Os02g0794700"/>
<dbReference type="eggNOG" id="KOG2597">
    <property type="taxonomic scope" value="Eukaryota"/>
</dbReference>
<dbReference type="InParanoid" id="Q6K669"/>
<dbReference type="Proteomes" id="UP000000763">
    <property type="component" value="Chromosome 2"/>
</dbReference>
<dbReference type="Proteomes" id="UP000007752">
    <property type="component" value="Chromosome 2"/>
</dbReference>
<dbReference type="Proteomes" id="UP000059680">
    <property type="component" value="Chromosome 2"/>
</dbReference>
<dbReference type="GO" id="GO:0009507">
    <property type="term" value="C:chloroplast"/>
    <property type="evidence" value="ECO:0007669"/>
    <property type="project" value="UniProtKB-SubCell"/>
</dbReference>
<dbReference type="GO" id="GO:0005737">
    <property type="term" value="C:cytoplasm"/>
    <property type="evidence" value="ECO:0000318"/>
    <property type="project" value="GO_Central"/>
</dbReference>
<dbReference type="GO" id="GO:0030145">
    <property type="term" value="F:manganese ion binding"/>
    <property type="evidence" value="ECO:0000250"/>
    <property type="project" value="UniProtKB"/>
</dbReference>
<dbReference type="GO" id="GO:0070006">
    <property type="term" value="F:metalloaminopeptidase activity"/>
    <property type="evidence" value="ECO:0007669"/>
    <property type="project" value="InterPro"/>
</dbReference>
<dbReference type="GO" id="GO:0008233">
    <property type="term" value="F:peptidase activity"/>
    <property type="evidence" value="ECO:0000318"/>
    <property type="project" value="GO_Central"/>
</dbReference>
<dbReference type="GO" id="GO:0006508">
    <property type="term" value="P:proteolysis"/>
    <property type="evidence" value="ECO:0000318"/>
    <property type="project" value="GO_Central"/>
</dbReference>
<dbReference type="CDD" id="cd00433">
    <property type="entry name" value="Peptidase_M17"/>
    <property type="match status" value="1"/>
</dbReference>
<dbReference type="FunFam" id="3.40.220.10:FF:000011">
    <property type="entry name" value="Leucine aminopeptidase 2, chloroplastic"/>
    <property type="match status" value="1"/>
</dbReference>
<dbReference type="FunFam" id="3.40.630.10:FF:000033">
    <property type="entry name" value="M17 leucyl aminopeptidase"/>
    <property type="match status" value="1"/>
</dbReference>
<dbReference type="Gene3D" id="3.40.220.10">
    <property type="entry name" value="Leucine Aminopeptidase, subunit E, domain 1"/>
    <property type="match status" value="1"/>
</dbReference>
<dbReference type="Gene3D" id="3.40.630.10">
    <property type="entry name" value="Zn peptidases"/>
    <property type="match status" value="1"/>
</dbReference>
<dbReference type="HAMAP" id="MF_00181">
    <property type="entry name" value="Cytosol_peptidase_M17"/>
    <property type="match status" value="1"/>
</dbReference>
<dbReference type="InterPro" id="IPR011356">
    <property type="entry name" value="Leucine_aapep/pepB"/>
</dbReference>
<dbReference type="InterPro" id="IPR043472">
    <property type="entry name" value="Macro_dom-like"/>
</dbReference>
<dbReference type="InterPro" id="IPR000819">
    <property type="entry name" value="Peptidase_M17_C"/>
</dbReference>
<dbReference type="InterPro" id="IPR023042">
    <property type="entry name" value="Peptidase_M17_leu_NH2_pept"/>
</dbReference>
<dbReference type="InterPro" id="IPR008283">
    <property type="entry name" value="Peptidase_M17_N"/>
</dbReference>
<dbReference type="NCBIfam" id="NF002076">
    <property type="entry name" value="PRK00913.2-3"/>
    <property type="match status" value="1"/>
</dbReference>
<dbReference type="PANTHER" id="PTHR11963:SF23">
    <property type="entry name" value="CYTOSOL AMINOPEPTIDASE"/>
    <property type="match status" value="1"/>
</dbReference>
<dbReference type="PANTHER" id="PTHR11963">
    <property type="entry name" value="LEUCINE AMINOPEPTIDASE-RELATED"/>
    <property type="match status" value="1"/>
</dbReference>
<dbReference type="Pfam" id="PF00883">
    <property type="entry name" value="Peptidase_M17"/>
    <property type="match status" value="1"/>
</dbReference>
<dbReference type="Pfam" id="PF02789">
    <property type="entry name" value="Peptidase_M17_N"/>
    <property type="match status" value="1"/>
</dbReference>
<dbReference type="PRINTS" id="PR00481">
    <property type="entry name" value="LAMNOPPTDASE"/>
</dbReference>
<dbReference type="SUPFAM" id="SSF52949">
    <property type="entry name" value="Macro domain-like"/>
    <property type="match status" value="1"/>
</dbReference>
<dbReference type="SUPFAM" id="SSF53187">
    <property type="entry name" value="Zn-dependent exopeptidases"/>
    <property type="match status" value="1"/>
</dbReference>
<dbReference type="PROSITE" id="PS00631">
    <property type="entry name" value="CYTOSOL_AP"/>
    <property type="match status" value="1"/>
</dbReference>
<protein>
    <recommendedName>
        <fullName>Leucine aminopeptidase 2, chloroplastic</fullName>
        <ecNumber>3.4.11.1</ecNumber>
    </recommendedName>
    <alternativeName>
        <fullName>Leucyl aminopeptidase 2</fullName>
        <shortName>LAP 2</shortName>
    </alternativeName>
    <alternativeName>
        <fullName>Proline aminopeptidase 2</fullName>
        <ecNumber>3.4.11.5</ecNumber>
    </alternativeName>
    <alternativeName>
        <fullName>Prolyl aminopeptidase 2</fullName>
    </alternativeName>
</protein>
<comment type="function">
    <text evidence="1">Presumably involved in the processing and regular turnover of intracellular proteins. Catalyzes the removal of unsubstituted N-terminal amino acids from various peptides (By similarity).</text>
</comment>
<comment type="catalytic activity">
    <reaction>
        <text>Release of an N-terminal amino acid, Xaa-|-Yaa-, in which Xaa is preferably Leu, but may be other amino acids including Pro although not Arg or Lys, and Yaa may be Pro. Amino acid amides and methyl esters are also readily hydrolyzed, but rates on arylamides are exceedingly low.</text>
        <dbReference type="EC" id="3.4.11.1"/>
    </reaction>
</comment>
<comment type="catalytic activity">
    <reaction>
        <text>Release of N-terminal proline from a peptide.</text>
        <dbReference type="EC" id="3.4.11.5"/>
    </reaction>
</comment>
<comment type="cofactor">
    <cofactor evidence="2">
        <name>Mn(2+)</name>
        <dbReference type="ChEBI" id="CHEBI:29035"/>
    </cofactor>
    <text evidence="2">Binds 2 Mn(2+) ions per subunit.</text>
</comment>
<comment type="subunit">
    <text evidence="3">Homohexamer (dimer of homotrimers).</text>
</comment>
<comment type="subcellular location">
    <subcellularLocation>
        <location evidence="5">Plastid</location>
        <location evidence="5">Chloroplast</location>
    </subcellularLocation>
</comment>
<comment type="similarity">
    <text evidence="5">Belongs to the peptidase M17 family.</text>
</comment>
<comment type="sequence caution" evidence="5">
    <conflict type="erroneous gene model prediction">
        <sequence resource="EMBL-CDS" id="BAF10293"/>
    </conflict>
</comment>
<comment type="sequence caution" evidence="5">
    <conflict type="erroneous gene model prediction">
        <sequence resource="EMBL-CDS" id="BAS81349"/>
    </conflict>
</comment>
<comment type="sequence caution" evidence="5">
    <conflict type="erroneous gene model prediction">
        <sequence resource="EMBL-CDS" id="BAS81350"/>
    </conflict>
</comment>
<accession>Q6K669</accession>
<accession>A0A0P0VQQ2</accession>
<accession>A3AC84</accession>
<accession>Q0DWU5</accession>
<reference key="1">
    <citation type="journal article" date="2005" name="Nature">
        <title>The map-based sequence of the rice genome.</title>
        <authorList>
            <consortium name="International rice genome sequencing project (IRGSP)"/>
        </authorList>
    </citation>
    <scope>NUCLEOTIDE SEQUENCE [LARGE SCALE GENOMIC DNA]</scope>
    <source>
        <strain>cv. Nipponbare</strain>
    </source>
</reference>
<reference key="2">
    <citation type="journal article" date="2008" name="Nucleic Acids Res.">
        <title>The rice annotation project database (RAP-DB): 2008 update.</title>
        <authorList>
            <consortium name="The rice annotation project (RAP)"/>
        </authorList>
    </citation>
    <scope>GENOME REANNOTATION</scope>
    <source>
        <strain>cv. Nipponbare</strain>
    </source>
</reference>
<reference key="3">
    <citation type="journal article" date="2013" name="Rice">
        <title>Improvement of the Oryza sativa Nipponbare reference genome using next generation sequence and optical map data.</title>
        <authorList>
            <person name="Kawahara Y."/>
            <person name="de la Bastide M."/>
            <person name="Hamilton J.P."/>
            <person name="Kanamori H."/>
            <person name="McCombie W.R."/>
            <person name="Ouyang S."/>
            <person name="Schwartz D.C."/>
            <person name="Tanaka T."/>
            <person name="Wu J."/>
            <person name="Zhou S."/>
            <person name="Childs K.L."/>
            <person name="Davidson R.M."/>
            <person name="Lin H."/>
            <person name="Quesada-Ocampo L."/>
            <person name="Vaillancourt B."/>
            <person name="Sakai H."/>
            <person name="Lee S.S."/>
            <person name="Kim J."/>
            <person name="Numa H."/>
            <person name="Itoh T."/>
            <person name="Buell C.R."/>
            <person name="Matsumoto T."/>
        </authorList>
    </citation>
    <scope>GENOME REANNOTATION</scope>
    <source>
        <strain>cv. Nipponbare</strain>
    </source>
</reference>
<reference key="4">
    <citation type="journal article" date="2005" name="PLoS Biol.">
        <title>The genomes of Oryza sativa: a history of duplications.</title>
        <authorList>
            <person name="Yu J."/>
            <person name="Wang J."/>
            <person name="Lin W."/>
            <person name="Li S."/>
            <person name="Li H."/>
            <person name="Zhou J."/>
            <person name="Ni P."/>
            <person name="Dong W."/>
            <person name="Hu S."/>
            <person name="Zeng C."/>
            <person name="Zhang J."/>
            <person name="Zhang Y."/>
            <person name="Li R."/>
            <person name="Xu Z."/>
            <person name="Li S."/>
            <person name="Li X."/>
            <person name="Zheng H."/>
            <person name="Cong L."/>
            <person name="Lin L."/>
            <person name="Yin J."/>
            <person name="Geng J."/>
            <person name="Li G."/>
            <person name="Shi J."/>
            <person name="Liu J."/>
            <person name="Lv H."/>
            <person name="Li J."/>
            <person name="Wang J."/>
            <person name="Deng Y."/>
            <person name="Ran L."/>
            <person name="Shi X."/>
            <person name="Wang X."/>
            <person name="Wu Q."/>
            <person name="Li C."/>
            <person name="Ren X."/>
            <person name="Wang J."/>
            <person name="Wang X."/>
            <person name="Li D."/>
            <person name="Liu D."/>
            <person name="Zhang X."/>
            <person name="Ji Z."/>
            <person name="Zhao W."/>
            <person name="Sun Y."/>
            <person name="Zhang Z."/>
            <person name="Bao J."/>
            <person name="Han Y."/>
            <person name="Dong L."/>
            <person name="Ji J."/>
            <person name="Chen P."/>
            <person name="Wu S."/>
            <person name="Liu J."/>
            <person name="Xiao Y."/>
            <person name="Bu D."/>
            <person name="Tan J."/>
            <person name="Yang L."/>
            <person name="Ye C."/>
            <person name="Zhang J."/>
            <person name="Xu J."/>
            <person name="Zhou Y."/>
            <person name="Yu Y."/>
            <person name="Zhang B."/>
            <person name="Zhuang S."/>
            <person name="Wei H."/>
            <person name="Liu B."/>
            <person name="Lei M."/>
            <person name="Yu H."/>
            <person name="Li Y."/>
            <person name="Xu H."/>
            <person name="Wei S."/>
            <person name="He X."/>
            <person name="Fang L."/>
            <person name="Zhang Z."/>
            <person name="Zhang Y."/>
            <person name="Huang X."/>
            <person name="Su Z."/>
            <person name="Tong W."/>
            <person name="Li J."/>
            <person name="Tong Z."/>
            <person name="Li S."/>
            <person name="Ye J."/>
            <person name="Wang L."/>
            <person name="Fang L."/>
            <person name="Lei T."/>
            <person name="Chen C.-S."/>
            <person name="Chen H.-C."/>
            <person name="Xu Z."/>
            <person name="Li H."/>
            <person name="Huang H."/>
            <person name="Zhang F."/>
            <person name="Xu H."/>
            <person name="Li N."/>
            <person name="Zhao C."/>
            <person name="Li S."/>
            <person name="Dong L."/>
            <person name="Huang Y."/>
            <person name="Li L."/>
            <person name="Xi Y."/>
            <person name="Qi Q."/>
            <person name="Li W."/>
            <person name="Zhang B."/>
            <person name="Hu W."/>
            <person name="Zhang Y."/>
            <person name="Tian X."/>
            <person name="Jiao Y."/>
            <person name="Liang X."/>
            <person name="Jin J."/>
            <person name="Gao L."/>
            <person name="Zheng W."/>
            <person name="Hao B."/>
            <person name="Liu S.-M."/>
            <person name="Wang W."/>
            <person name="Yuan L."/>
            <person name="Cao M."/>
            <person name="McDermott J."/>
            <person name="Samudrala R."/>
            <person name="Wang J."/>
            <person name="Wong G.K.-S."/>
            <person name="Yang H."/>
        </authorList>
    </citation>
    <scope>NUCLEOTIDE SEQUENCE [LARGE SCALE GENOMIC DNA]</scope>
    <source>
        <strain>cv. Nipponbare</strain>
    </source>
</reference>
<reference key="5">
    <citation type="journal article" date="2003" name="Science">
        <title>Collection, mapping, and annotation of over 28,000 cDNA clones from japonica rice.</title>
        <authorList>
            <consortium name="The rice full-length cDNA consortium"/>
        </authorList>
    </citation>
    <scope>NUCLEOTIDE SEQUENCE [LARGE SCALE MRNA] OF 283-598</scope>
    <source>
        <strain>cv. Nipponbare</strain>
    </source>
</reference>
<keyword id="KW-0031">Aminopeptidase</keyword>
<keyword id="KW-0150">Chloroplast</keyword>
<keyword id="KW-0378">Hydrolase</keyword>
<keyword id="KW-0464">Manganese</keyword>
<keyword id="KW-0479">Metal-binding</keyword>
<keyword id="KW-0934">Plastid</keyword>
<keyword id="KW-0645">Protease</keyword>
<keyword id="KW-1185">Reference proteome</keyword>
<keyword id="KW-0809">Transit peptide</keyword>
<organism>
    <name type="scientific">Oryza sativa subsp. japonica</name>
    <name type="common">Rice</name>
    <dbReference type="NCBI Taxonomy" id="39947"/>
    <lineage>
        <taxon>Eukaryota</taxon>
        <taxon>Viridiplantae</taxon>
        <taxon>Streptophyta</taxon>
        <taxon>Embryophyta</taxon>
        <taxon>Tracheophyta</taxon>
        <taxon>Spermatophyta</taxon>
        <taxon>Magnoliopsida</taxon>
        <taxon>Liliopsida</taxon>
        <taxon>Poales</taxon>
        <taxon>Poaceae</taxon>
        <taxon>BOP clade</taxon>
        <taxon>Oryzoideae</taxon>
        <taxon>Oryzeae</taxon>
        <taxon>Oryzinae</taxon>
        <taxon>Oryza</taxon>
        <taxon>Oryza sativa</taxon>
    </lineage>
</organism>
<gene>
    <name type="ordered locus">Os02g0794700</name>
    <name type="ordered locus">LOC_Os02g55140</name>
    <name type="ORF">OJ1695_H09.4</name>
    <name type="ORF">P0700F06.36</name>
</gene>
<sequence>MATAASTSAAAVAAASRLLVRRAPPRLLRRLPRAALAASRPSPPSSSSYGAAAVALGRQPLGHRARMGHTAAAAAAAGPALGLTKPNAVEPPQVSFAAKDVEFSEWKGDILAIAVTENDLVKGSDSKFENAVLKKLDGQLGGLLSEASAEEDFTGKAGQSVVLRLPGQGFKRVGLIGLGQNAPSTTTACKGIGESVASVAKSAQASSAAIVFASVGGIQEDFKLTAAAAIASGTVLGLHEDSRYKSESKKVHLKQVDLIGFGSGPEVDQKLKYANDLSSGVIFGKELVNSPANVLTPAVLAEEASNIASTYSDVFTATILDVEKCKELKMGSYLGVAAASANPPHFIHLCYKPPGGNAKRKLAIVGKGLTFDSGGYNIKTGPGCSIELMKFDMGGSAAVFGAAKALGQIKPPGVEVHFIVAACENMISGTGMRPGDIVTASNGKTIEVNNTDAEGRLTLADALVYACNQGVDKIIDLATLTGACVVALGPSIAGIFTPSDELAKEVAAASEISGEKFWRMPLEESYWESMKSGVADMVNTGGRQGGSITAALFLKQFVDEKVQWMHIDMAGPVWNDKKRAATGFGVSTLVEWVLKNSS</sequence>
<evidence type="ECO:0000250" key="1"/>
<evidence type="ECO:0000250" key="2">
    <source>
        <dbReference type="UniProtKB" id="P30184"/>
    </source>
</evidence>
<evidence type="ECO:0000250" key="3">
    <source>
        <dbReference type="UniProtKB" id="Q10712"/>
    </source>
</evidence>
<evidence type="ECO:0000255" key="4"/>
<evidence type="ECO:0000305" key="5"/>
<name>AMPL2_ORYSJ</name>